<keyword id="KW-0025">Alternative splicing</keyword>
<keyword id="KW-0067">ATP-binding</keyword>
<keyword id="KW-0156">Chromatin regulator</keyword>
<keyword id="KW-0175">Coiled coil</keyword>
<keyword id="KW-0217">Developmental protein</keyword>
<keyword id="KW-0238">DNA-binding</keyword>
<keyword id="KW-0347">Helicase</keyword>
<keyword id="KW-0378">Hydrolase</keyword>
<keyword id="KW-0547">Nucleotide-binding</keyword>
<keyword id="KW-0539">Nucleus</keyword>
<keyword id="KW-1185">Reference proteome</keyword>
<dbReference type="EC" id="3.6.4.-"/>
<dbReference type="EMBL" id="AY551965">
    <property type="protein sequence ID" value="AAS65429.1"/>
    <property type="molecule type" value="mRNA"/>
</dbReference>
<dbReference type="EMBL" id="AL132904">
    <property type="protein sequence ID" value="CAC35851.3"/>
    <property type="molecule type" value="Genomic_DNA"/>
</dbReference>
<dbReference type="EMBL" id="AL132904">
    <property type="protein sequence ID" value="CBW48563.1"/>
    <property type="molecule type" value="Genomic_DNA"/>
</dbReference>
<dbReference type="EMBL" id="AL132904">
    <property type="protein sequence ID" value="CBW48564.1"/>
    <property type="molecule type" value="Genomic_DNA"/>
</dbReference>
<dbReference type="EMBL" id="AL132904">
    <property type="protein sequence ID" value="CBW48565.1"/>
    <property type="molecule type" value="Genomic_DNA"/>
</dbReference>
<dbReference type="RefSeq" id="NP_001255179.1">
    <molecule id="Q9NEL2-1"/>
    <property type="nucleotide sequence ID" value="NM_001268250.2"/>
</dbReference>
<dbReference type="RefSeq" id="NP_001255180.1">
    <molecule id="Q9NEL2-2"/>
    <property type="nucleotide sequence ID" value="NM_001268251.3"/>
</dbReference>
<dbReference type="RefSeq" id="NP_001255181.1">
    <property type="nucleotide sequence ID" value="NM_001268252.1"/>
</dbReference>
<dbReference type="RefSeq" id="NP_001255182.1">
    <property type="nucleotide sequence ID" value="NM_001268253.1"/>
</dbReference>
<dbReference type="RefSeq" id="NP_001367265.1">
    <molecule id="Q9NEL2-3"/>
    <property type="nucleotide sequence ID" value="NM_001379968.1"/>
</dbReference>
<dbReference type="RefSeq" id="NP_001367266.1">
    <molecule id="Q9NEL2-4"/>
    <property type="nucleotide sequence ID" value="NM_001379967.1"/>
</dbReference>
<dbReference type="SMR" id="Q9NEL2"/>
<dbReference type="BioGRID" id="55513">
    <property type="interactions" value="13"/>
</dbReference>
<dbReference type="FunCoup" id="Q9NEL2">
    <property type="interactions" value="2838"/>
</dbReference>
<dbReference type="IntAct" id="Q9NEL2">
    <property type="interactions" value="2"/>
</dbReference>
<dbReference type="MINT" id="Q9NEL2"/>
<dbReference type="STRING" id="6239.Y111B2A.22a.1"/>
<dbReference type="PaxDb" id="6239-Y111B2A.22a"/>
<dbReference type="PeptideAtlas" id="Q9NEL2"/>
<dbReference type="EnsemblMetazoa" id="Y111B2A.22a.1">
    <molecule id="Q9NEL2-1"/>
    <property type="protein sequence ID" value="Y111B2A.22a.1"/>
    <property type="gene ID" value="WBGene00007027"/>
</dbReference>
<dbReference type="EnsemblMetazoa" id="Y111B2A.22b.1">
    <molecule id="Q9NEL2-2"/>
    <property type="protein sequence ID" value="Y111B2A.22b.1"/>
    <property type="gene ID" value="WBGene00007027"/>
</dbReference>
<dbReference type="EnsemblMetazoa" id="Y111B2A.22c.1">
    <molecule id="Q9NEL2-3"/>
    <property type="protein sequence ID" value="Y111B2A.22c.1"/>
    <property type="gene ID" value="WBGene00007027"/>
</dbReference>
<dbReference type="EnsemblMetazoa" id="Y111B2A.22d.1">
    <molecule id="Q9NEL2-4"/>
    <property type="protein sequence ID" value="Y111B2A.22d.1"/>
    <property type="gene ID" value="WBGene00007027"/>
</dbReference>
<dbReference type="GeneID" id="190954"/>
<dbReference type="KEGG" id="cel:CELE_Y111B2A.22"/>
<dbReference type="UCSC" id="Y111B2A.22">
    <molecule id="Q9NEL2-1"/>
    <property type="organism name" value="c. elegans"/>
</dbReference>
<dbReference type="AGR" id="WB:WBGene00007027"/>
<dbReference type="CTD" id="190954"/>
<dbReference type="WormBase" id="Y111B2A.22a">
    <molecule id="Q9NEL2-1"/>
    <property type="protein sequence ID" value="CE40241"/>
    <property type="gene ID" value="WBGene00007027"/>
    <property type="gene designation" value="ssl-1"/>
</dbReference>
<dbReference type="WormBase" id="Y111B2A.22b">
    <molecule id="Q9NEL2-2"/>
    <property type="protein sequence ID" value="CE45331"/>
    <property type="gene ID" value="WBGene00007027"/>
    <property type="gene designation" value="ssl-1"/>
</dbReference>
<dbReference type="WormBase" id="Y111B2A.22c">
    <molecule id="Q9NEL2-3"/>
    <property type="protein sequence ID" value="CE45313"/>
    <property type="gene ID" value="WBGene00007027"/>
    <property type="gene designation" value="ssl-1"/>
</dbReference>
<dbReference type="WormBase" id="Y111B2A.22d">
    <molecule id="Q9NEL2-4"/>
    <property type="protein sequence ID" value="CE45363"/>
    <property type="gene ID" value="WBGene00007027"/>
    <property type="gene designation" value="ssl-1"/>
</dbReference>
<dbReference type="eggNOG" id="KOG0391">
    <property type="taxonomic scope" value="Eukaryota"/>
</dbReference>
<dbReference type="GeneTree" id="ENSGT00940000167340"/>
<dbReference type="HOGENOM" id="CLU_000982_0_0_1"/>
<dbReference type="InParanoid" id="Q9NEL2"/>
<dbReference type="OMA" id="KSANEGM"/>
<dbReference type="OrthoDB" id="448448at2759"/>
<dbReference type="PhylomeDB" id="Q9NEL2"/>
<dbReference type="PRO" id="PR:Q9NEL2"/>
<dbReference type="Proteomes" id="UP000001940">
    <property type="component" value="Chromosome III"/>
</dbReference>
<dbReference type="Bgee" id="WBGene00007027">
    <property type="expression patterns" value="Expressed in pharyngeal muscle cell (C elegans) and 3 other cell types or tissues"/>
</dbReference>
<dbReference type="GO" id="GO:0000812">
    <property type="term" value="C:Swr1 complex"/>
    <property type="evidence" value="ECO:0000318"/>
    <property type="project" value="GO_Central"/>
</dbReference>
<dbReference type="GO" id="GO:0005524">
    <property type="term" value="F:ATP binding"/>
    <property type="evidence" value="ECO:0007669"/>
    <property type="project" value="UniProtKB-KW"/>
</dbReference>
<dbReference type="GO" id="GO:0016887">
    <property type="term" value="F:ATP hydrolysis activity"/>
    <property type="evidence" value="ECO:0000318"/>
    <property type="project" value="GO_Central"/>
</dbReference>
<dbReference type="GO" id="GO:0003677">
    <property type="term" value="F:DNA binding"/>
    <property type="evidence" value="ECO:0007669"/>
    <property type="project" value="UniProtKB-KW"/>
</dbReference>
<dbReference type="GO" id="GO:0004386">
    <property type="term" value="F:helicase activity"/>
    <property type="evidence" value="ECO:0007669"/>
    <property type="project" value="UniProtKB-KW"/>
</dbReference>
<dbReference type="GO" id="GO:0042393">
    <property type="term" value="F:histone binding"/>
    <property type="evidence" value="ECO:0000318"/>
    <property type="project" value="GO_Central"/>
</dbReference>
<dbReference type="GO" id="GO:0006338">
    <property type="term" value="P:chromatin remodeling"/>
    <property type="evidence" value="ECO:0000318"/>
    <property type="project" value="GO_Central"/>
</dbReference>
<dbReference type="GO" id="GO:0009996">
    <property type="term" value="P:negative regulation of cell fate specification"/>
    <property type="evidence" value="ECO:0000315"/>
    <property type="project" value="UniProtKB"/>
</dbReference>
<dbReference type="CDD" id="cd18003">
    <property type="entry name" value="DEXQc_SRCAP"/>
    <property type="match status" value="1"/>
</dbReference>
<dbReference type="CDD" id="cd18793">
    <property type="entry name" value="SF2_C_SNF"/>
    <property type="match status" value="1"/>
</dbReference>
<dbReference type="FunFam" id="3.40.50.300:FF:001674">
    <property type="entry name" value="E1A-binding protein p400 isoform X7"/>
    <property type="match status" value="1"/>
</dbReference>
<dbReference type="FunFam" id="1.20.120.850:FF:000024">
    <property type="entry name" value="Helicase ssl-1"/>
    <property type="match status" value="1"/>
</dbReference>
<dbReference type="FunFam" id="3.40.50.10810:FF:000005">
    <property type="entry name" value="Photoperiod-independent early flowering 1"/>
    <property type="match status" value="1"/>
</dbReference>
<dbReference type="Gene3D" id="3.40.50.300">
    <property type="entry name" value="P-loop containing nucleotide triphosphate hydrolases"/>
    <property type="match status" value="1"/>
</dbReference>
<dbReference type="Gene3D" id="1.20.120.850">
    <property type="entry name" value="SWI2/SNF2 ATPases, N-terminal domain"/>
    <property type="match status" value="1"/>
</dbReference>
<dbReference type="Gene3D" id="3.40.50.10810">
    <property type="entry name" value="Tandem AAA-ATPase domain"/>
    <property type="match status" value="1"/>
</dbReference>
<dbReference type="InterPro" id="IPR014001">
    <property type="entry name" value="Helicase_ATP-bd"/>
</dbReference>
<dbReference type="InterPro" id="IPR001650">
    <property type="entry name" value="Helicase_C-like"/>
</dbReference>
<dbReference type="InterPro" id="IPR014012">
    <property type="entry name" value="HSA_dom"/>
</dbReference>
<dbReference type="InterPro" id="IPR050520">
    <property type="entry name" value="INO80/SWR1_helicase"/>
</dbReference>
<dbReference type="InterPro" id="IPR027417">
    <property type="entry name" value="P-loop_NTPase"/>
</dbReference>
<dbReference type="InterPro" id="IPR038718">
    <property type="entry name" value="SNF2-like_sf"/>
</dbReference>
<dbReference type="InterPro" id="IPR049730">
    <property type="entry name" value="SNF2/RAD54-like_C"/>
</dbReference>
<dbReference type="InterPro" id="IPR000330">
    <property type="entry name" value="SNF2_N"/>
</dbReference>
<dbReference type="PANTHER" id="PTHR45685:SF1">
    <property type="entry name" value="HELICASE SRCAP"/>
    <property type="match status" value="1"/>
</dbReference>
<dbReference type="PANTHER" id="PTHR45685">
    <property type="entry name" value="HELICASE SRCAP-RELATED"/>
    <property type="match status" value="1"/>
</dbReference>
<dbReference type="Pfam" id="PF00271">
    <property type="entry name" value="Helicase_C"/>
    <property type="match status" value="1"/>
</dbReference>
<dbReference type="Pfam" id="PF07529">
    <property type="entry name" value="HSA"/>
    <property type="match status" value="1"/>
</dbReference>
<dbReference type="Pfam" id="PF00176">
    <property type="entry name" value="SNF2-rel_dom"/>
    <property type="match status" value="1"/>
</dbReference>
<dbReference type="SMART" id="SM00487">
    <property type="entry name" value="DEXDc"/>
    <property type="match status" value="1"/>
</dbReference>
<dbReference type="SMART" id="SM00490">
    <property type="entry name" value="HELICc"/>
    <property type="match status" value="1"/>
</dbReference>
<dbReference type="SMART" id="SM00573">
    <property type="entry name" value="HSA"/>
    <property type="match status" value="1"/>
</dbReference>
<dbReference type="SUPFAM" id="SSF52540">
    <property type="entry name" value="P-loop containing nucleoside triphosphate hydrolases"/>
    <property type="match status" value="2"/>
</dbReference>
<dbReference type="PROSITE" id="PS51192">
    <property type="entry name" value="HELICASE_ATP_BIND_1"/>
    <property type="match status" value="1"/>
</dbReference>
<dbReference type="PROSITE" id="PS51194">
    <property type="entry name" value="HELICASE_CTER"/>
    <property type="match status" value="1"/>
</dbReference>
<dbReference type="PROSITE" id="PS51204">
    <property type="entry name" value="HSA"/>
    <property type="match status" value="1"/>
</dbReference>
<reference key="1">
    <citation type="journal article" date="2004" name="Dev. Cell">
        <title>A new class of C. elegans synMuv genes implicates a Tip60/NuA4-like HAT complex as a negative regulator of Ras signaling.</title>
        <authorList>
            <person name="Ceol C.J."/>
            <person name="Horvitz H.R."/>
        </authorList>
    </citation>
    <scope>NUCLEOTIDE SEQUENCE [MRNA] (ISOFORM A)</scope>
    <scope>FUNCTION</scope>
</reference>
<reference key="2">
    <citation type="journal article" date="1998" name="Science">
        <title>Genome sequence of the nematode C. elegans: a platform for investigating biology.</title>
        <authorList>
            <consortium name="The C. elegans sequencing consortium"/>
        </authorList>
    </citation>
    <scope>NUCLEOTIDE SEQUENCE [LARGE SCALE GENOMIC DNA]</scope>
    <scope>ALTERNATIVE SPLICING</scope>
    <source>
        <strain>Bristol N2</strain>
    </source>
</reference>
<reference key="3">
    <citation type="journal article" date="2006" name="Dev. Cell">
        <title>The PLZF-like protein TRA-4 cooperates with the Gli-like transcription factor TRA-1 to promote female development in C. elegans.</title>
        <authorList>
            <person name="Grote P."/>
            <person name="Conradt B."/>
        </authorList>
    </citation>
    <scope>DISRUPTION PHENOTYPE</scope>
</reference>
<reference key="4">
    <citation type="journal article" date="2006" name="PLoS Genet.">
        <title>Temporal regulation of foregut development by HTZ-1/H2A.Z and PHA-4/FoxA.</title>
        <authorList>
            <person name="Updike D.L."/>
            <person name="Mango S.E."/>
        </authorList>
    </citation>
    <scope>FUNCTION</scope>
    <scope>DISRUPTION PHENOTYPE</scope>
</reference>
<comment type="function">
    <text evidence="6 7">Probable catalytic component of a chromatin-remodeling complex which mediates the ATP-dependent exchange of histone H2A variant H2AV/htz-1 for H2A, leading to transcriptional regulation of selected genes by chromatin remodeling. Involved in foregut development, and may be involved in vulval development.</text>
</comment>
<comment type="subcellular location">
    <subcellularLocation>
        <location evidence="4">Nucleus</location>
    </subcellularLocation>
</comment>
<comment type="alternative products">
    <event type="alternative splicing"/>
    <isoform>
        <id>Q9NEL2-1</id>
        <name>a</name>
        <sequence type="displayed"/>
    </isoform>
    <isoform>
        <id>Q9NEL2-2</id>
        <name>b</name>
        <sequence type="described" ref="VSP_043687 VSP_043688"/>
    </isoform>
    <isoform>
        <id>Q9NEL2-3</id>
        <name>c</name>
        <sequence type="described" ref="VSP_043685"/>
    </isoform>
    <isoform>
        <id>Q9NEL2-4</id>
        <name>d</name>
        <sequence type="described" ref="VSP_043686"/>
    </isoform>
</comment>
<comment type="disruption phenotype">
    <text evidence="7 8">Defects in feminization. Embryonic arrest.</text>
</comment>
<comment type="similarity">
    <text evidence="9">Belongs to the SNF2/RAD54 helicase family. SWR1 subfamily.</text>
</comment>
<proteinExistence type="evidence at transcript level"/>
<accession>Q9NEL2</accession>
<accession>E0R7L4</accession>
<accession>E0R7L5</accession>
<accession>E0R7L6</accession>
<accession>Q6Q9H2</accession>
<sequence>MPATPVRASSTRISRRTSSRSVADDQPSTSSAVAPPPSPIAIETDEDAVVEEEKKKKKTSDDLEIITPRTPVDRRIPYICSILLTENRSIRDKLVLSSGPVRQEDHEEQIARAQRIQPVVDQIQRVEQIILNGSVEDILKDPRFAVMADLTKEPPPTPAPPPPIQKTMQPIEVKIEDSEGSNTAQPSVLPSCGGGETNVERAAKREAHVLARIAELRKNGLWSNSRLPKCVEPERNKTHWDYLLEEVKWMAVDFRTETNTKRKIAKVIAHAIAKQHRDKQIEIERAAEREIKEKRKMCAGIAKMVRDFWSSTDKVVDIRAKEVLESRLRKARNKHLMFVIGQVDEMSNIVQEGLVSSSKSPSIASDRDDKDEEFKAPGSDSESDDEQTIANAEKSQKKEDVRQEVDALQNEATVDMDDFLYTLPPEYLKAYGLTQEDLEEMKREKLEEQKARKEACGDNEEKMEIDESPSSDAQKPSTSSSDLTAEQLQDPTAEDGNGDGHGVLENVDYVKLNSQDSDERQQELANIAEEALKFQPKGYTLETTQVKTPVPFLIRGQLREYQMVGLDWMVTLYEKNLNGILADEMGLGKTIQTISLLAHMACSESIWGPHLIVVPTSVILNWEMEFKKWCPALKILTYFGTAKERAEKRKGWMKPNCFHVCITSYKTVTQDIRAFKQRAWQYLILDEAQNIKNWKSQRWQALLNVRARRRLLLTGTPLQNSLMELWSLMHFLMPTIFSSHDDFKDWFSNPLTGMMEGNMEFNAPLIGRLHKVLRPFILRRLKKEVEKQLPEKTEHIVNCSLSKRQRYLYDDFMSRRSTKENLKSGNMMSVLNIVMQLRKCCNHPNLFEPRPVVAPFVVEKLQLDVPARLFEISQQDPSSSSASQIPEIFNLSKIGYQSSVRSAKPLIEELEAMSTYPEPRAPEVGGFRFNRTAFVAKNPHTEESEDEGVMRSRVLPKPINGTAQPLQNGNSIPQNAPNRPQTSCIRSKTVVNTVPLTISTDRSGFHFNMANVGRGVVRLDDSARMSPPLKRQKLTGTATNWSDYVPRHVVEKMEESRKNQLEIVRRRFEMIRAPIIPLEMVALVREEIIAEFPRLAVEEDEVVQERLLEYCELLVQRFGMYVEPVLTDAWQCRPSSSGLPSYIRNNLSNIELNSRSLLLNTSTNFDTRMSISRALQFPELRLIEYDCGKLQTLAVLLRQLYLYKHRCLIFTQMSKMLDVLQTFLSHHGYQYFRLDGTTGVEQRQAMMERFNADPKVFCFILSTRSGGVGVNLTGADTVIFYDSDWNPTMDAQAQDRCHRIGQTRNVSIYRLISERTIEENILRKATQKRRLGELAIDEAGFTPEFFKQSDSIRDLFDGENVEVTAVADVATTMSEKEMEVAMAKCEDEADVNAAKIAVAEANVDNAEFDEKSLPPMSNLQGDEEADEKYMELIQQLKPIERYAINFLETQYKPEFEEECKEAEALIDQKREEWDKNLNDTAVIDLDDSDSLLLNDPSTSADFYQSSSLLDEIKFYDELDDIMPIWLPPSPPDSDADFDLRMEDDCLDLMYEIEQMNEARLPQVCHEMRRPLAEKQQKQNTLNAFNDILSAKEKESVYDAVNKCLQMPQSEAITAESAASPAYTEHSSFSMDDTSQDAKIEPSLTENQQPTTTATTTTTVPQQQQQQQQQKSSKKKRNDNRTAQNRTAENGVKRATTPPPSWREEPDYDGAEWNIVEDYALLQAVQVEFANAHLVEKSANEGMVLNWEFVSNAVNKQTRFFRSARQCSIRYQMFVRPKELGQLVASDPISKKTMKVDLSHTELSHLRKGRMTTESQYAHDYGILTDKKHVNRFKSVRVAATRRPVQFWRGPKALESRNLQSLNGGMPPRHESRLAEFDVKTNIRLDAEDIVTMSDESIVAYEASKKKLLASRQTKPSPRQDVRFHTLVLRPYTVPVTTEYSAAPSRREMRIAVPPLQPSALSTISSVAAAATSGPLPSIQHLQSSSTGLGSQQNLQNSHNSEQRNNVQNMHQNQYNSSQNPPIPIRQIGAASSHQHDQGSQGPGGKPQAYHLVQQGSQQQQQQQQQATLQRRNAAAAAGSNVQFIQQQQQQQQSGKNCGQGQSFVVMGSQSSSNDGQGGASTVGGGGGGSQQPHQQQQQQPQQRIQYIPQVTGSGNNGGGGGRGGYGSTLVMPRGGRVVRPAGTLPGGGRLYVDHNRHPYPMSSNVVPVRVLPATQQGQQRMMTGQRRPAPAPGTVAAMVLPNRGAGGIPQMRSLQRGSYTGGGGQQRINVMVQPQQMRSNNGGGVGGQGGLQGGPGGPQGIRRPLVGRPLQRGVDNQAPTVAQVVVAPPQGMQQASQGPPVLHMQRAVSMQMPTSHHHQGQQQAPPQSSQQASQQAPTSDSGTSAPPRQAPPPQN</sequence>
<evidence type="ECO:0000255" key="1"/>
<evidence type="ECO:0000255" key="2">
    <source>
        <dbReference type="PROSITE-ProRule" id="PRU00541"/>
    </source>
</evidence>
<evidence type="ECO:0000255" key="3">
    <source>
        <dbReference type="PROSITE-ProRule" id="PRU00542"/>
    </source>
</evidence>
<evidence type="ECO:0000255" key="4">
    <source>
        <dbReference type="PROSITE-ProRule" id="PRU00549"/>
    </source>
</evidence>
<evidence type="ECO:0000256" key="5">
    <source>
        <dbReference type="SAM" id="MobiDB-lite"/>
    </source>
</evidence>
<evidence type="ECO:0000269" key="6">
    <source>
    </source>
</evidence>
<evidence type="ECO:0000269" key="7">
    <source>
    </source>
</evidence>
<evidence type="ECO:0000269" key="8">
    <source>
    </source>
</evidence>
<evidence type="ECO:0000305" key="9"/>
<feature type="chain" id="PRO_0000311237" description="Helicase ssl-1">
    <location>
        <begin position="1"/>
        <end position="2395"/>
    </location>
</feature>
<feature type="domain" description="HSA" evidence="4">
    <location>
        <begin position="227"/>
        <end position="300"/>
    </location>
</feature>
<feature type="domain" description="Helicase ATP-binding" evidence="2">
    <location>
        <begin position="570"/>
        <end position="735"/>
    </location>
</feature>
<feature type="domain" description="Helicase C-terminal" evidence="3">
    <location>
        <begin position="1196"/>
        <end position="1342"/>
    </location>
</feature>
<feature type="region of interest" description="Disordered" evidence="5">
    <location>
        <begin position="1"/>
        <end position="62"/>
    </location>
</feature>
<feature type="region of interest" description="Disordered" evidence="5">
    <location>
        <begin position="354"/>
        <end position="404"/>
    </location>
</feature>
<feature type="region of interest" description="Disordered" evidence="5">
    <location>
        <begin position="444"/>
        <end position="504"/>
    </location>
</feature>
<feature type="region of interest" description="Disordered" evidence="5">
    <location>
        <begin position="963"/>
        <end position="982"/>
    </location>
</feature>
<feature type="region of interest" description="Disordered" evidence="5">
    <location>
        <begin position="1615"/>
        <end position="1706"/>
    </location>
</feature>
<feature type="region of interest" description="Disordered" evidence="5">
    <location>
        <begin position="1977"/>
        <end position="2073"/>
    </location>
</feature>
<feature type="region of interest" description="Disordered" evidence="5">
    <location>
        <begin position="2092"/>
        <end position="2143"/>
    </location>
</feature>
<feature type="region of interest" description="Disordered" evidence="5">
    <location>
        <begin position="2276"/>
        <end position="2306"/>
    </location>
</feature>
<feature type="region of interest" description="Disordered" evidence="5">
    <location>
        <begin position="2350"/>
        <end position="2395"/>
    </location>
</feature>
<feature type="coiled-coil region" evidence="1">
    <location>
        <begin position="388"/>
        <end position="464"/>
    </location>
</feature>
<feature type="coiled-coil region" evidence="1">
    <location>
        <begin position="1452"/>
        <end position="1476"/>
    </location>
</feature>
<feature type="compositionally biased region" description="Low complexity" evidence="5">
    <location>
        <begin position="1"/>
        <end position="12"/>
    </location>
</feature>
<feature type="compositionally biased region" description="Polar residues" evidence="5">
    <location>
        <begin position="354"/>
        <end position="363"/>
    </location>
</feature>
<feature type="compositionally biased region" description="Basic and acidic residues" evidence="5">
    <location>
        <begin position="365"/>
        <end position="375"/>
    </location>
</feature>
<feature type="compositionally biased region" description="Basic and acidic residues" evidence="5">
    <location>
        <begin position="394"/>
        <end position="404"/>
    </location>
</feature>
<feature type="compositionally biased region" description="Basic and acidic residues" evidence="5">
    <location>
        <begin position="444"/>
        <end position="462"/>
    </location>
</feature>
<feature type="compositionally biased region" description="Polar residues" evidence="5">
    <location>
        <begin position="470"/>
        <end position="490"/>
    </location>
</feature>
<feature type="compositionally biased region" description="Low complexity" evidence="5">
    <location>
        <begin position="1647"/>
        <end position="1669"/>
    </location>
</feature>
<feature type="compositionally biased region" description="Low complexity" evidence="5">
    <location>
        <begin position="1981"/>
        <end position="1995"/>
    </location>
</feature>
<feature type="compositionally biased region" description="Polar residues" evidence="5">
    <location>
        <begin position="1996"/>
        <end position="2019"/>
    </location>
</feature>
<feature type="compositionally biased region" description="Low complexity" evidence="5">
    <location>
        <begin position="2051"/>
        <end position="2073"/>
    </location>
</feature>
<feature type="compositionally biased region" description="Low complexity" evidence="5">
    <location>
        <begin position="2092"/>
        <end position="2114"/>
    </location>
</feature>
<feature type="compositionally biased region" description="Gly residues" evidence="5">
    <location>
        <begin position="2115"/>
        <end position="2129"/>
    </location>
</feature>
<feature type="compositionally biased region" description="Low complexity" evidence="5">
    <location>
        <begin position="2130"/>
        <end position="2142"/>
    </location>
</feature>
<feature type="compositionally biased region" description="Gly residues" evidence="5">
    <location>
        <begin position="2281"/>
        <end position="2299"/>
    </location>
</feature>
<feature type="compositionally biased region" description="Low complexity" evidence="5">
    <location>
        <begin position="2361"/>
        <end position="2377"/>
    </location>
</feature>
<feature type="binding site" evidence="2">
    <location>
        <begin position="583"/>
        <end position="590"/>
    </location>
    <ligand>
        <name>ATP</name>
        <dbReference type="ChEBI" id="CHEBI:30616"/>
    </ligand>
</feature>
<feature type="splice variant" id="VSP_043685" description="In isoform c." evidence="9">
    <location>
        <begin position="1"/>
        <end position="1521"/>
    </location>
</feature>
<feature type="splice variant" id="VSP_043686" description="In isoform d." evidence="9">
    <location>
        <begin position="1"/>
        <end position="146"/>
    </location>
</feature>
<feature type="splice variant" id="VSP_043687" description="In isoform b." evidence="9">
    <original>IKFYDELDDIMPIWLPPSPPDSDADFDLRMEDDCLDLMYEIEQMNEARLPQVCHEMRRPLAEKQQKQNTLNAFNDILSAKEKESVYDAVNKCLQMPQSEAITAESAASPAYTEHSSFSMDDTSQDAKIEPSLTENQQPTTTATTTTTVPQQQQQQQQQKSSKKKRNDNRTAQNRTAENGVKRATTPPPSWREEPDYDGAEWNIVEDYALLQAVQVEFANAHLVEKSANEGMVLNWEFVSNAVNKQTRFFRSARQCSIRYQMFVRPKELGQLVASDPISKKTMKVDLSHTELSHLRKGRMTTESQYAHDYGILTDKKHVNRFKSVRVAATRRPVQFWRGPKALESRNLQSLNGGMPPRHESRLAEFDVKTNIRLDAEDIVTMSDESIVAYEASKKKLLASRQTKPSPRQD</original>
    <variation>VRDRRRRSSSLLQKAAQKPAKKPQNFQIRARSPSKRKSQAPSFDPYVSYAPHALASPPDSPRKRRSRGARSLGSGGGGGGGSRSVGRPARRSVKKEESDDDDEDYCQEEEVKRNPAEKVPPKRKRVVFVEPPEVKPPEPKKRVVVPAPSSSSSALTTLPQQGPLISLPKAVPVVPRPQQQAPPQLIKKHQQTLMPVKVLKISGGGGGTPGPSSVSPGPSILRRTVVPGIGAGGVGRLPLVRMPVRPPFPGSQAPAPPLRSGVAPTAPAAAPRQFVVPSSRVRVITTRTPVATTMVQQQQSPSPLMFPVRVVQRPGPSGPPPPGPPDRPGFGIYEKPRFSLGSRRSRGDSGPEDPAPPQPPPPTTSRPPPQA</variation>
    <location>
        <begin position="1512"/>
        <end position="1920"/>
    </location>
</feature>
<feature type="splice variant" id="VSP_043688" description="In isoform b." evidence="9">
    <location>
        <begin position="1921"/>
        <end position="2395"/>
    </location>
</feature>
<gene>
    <name type="primary">ssl-1</name>
    <name type="ORF">Y111B2A.22</name>
</gene>
<protein>
    <recommendedName>
        <fullName>Helicase ssl-1</fullName>
        <ecNumber>3.6.4.-</ecNumber>
    </recommendedName>
    <alternativeName>
        <fullName>Swi/snf2-like protein 1</fullName>
    </alternativeName>
</protein>
<name>SSL1_CAEEL</name>
<organism>
    <name type="scientific">Caenorhabditis elegans</name>
    <dbReference type="NCBI Taxonomy" id="6239"/>
    <lineage>
        <taxon>Eukaryota</taxon>
        <taxon>Metazoa</taxon>
        <taxon>Ecdysozoa</taxon>
        <taxon>Nematoda</taxon>
        <taxon>Chromadorea</taxon>
        <taxon>Rhabditida</taxon>
        <taxon>Rhabditina</taxon>
        <taxon>Rhabditomorpha</taxon>
        <taxon>Rhabditoidea</taxon>
        <taxon>Rhabditidae</taxon>
        <taxon>Peloderinae</taxon>
        <taxon>Caenorhabditis</taxon>
    </lineage>
</organism>